<keyword id="KW-0413">Isomerase</keyword>
<keyword id="KW-0677">Repeat</keyword>
<organism>
    <name type="scientific">Nectria sp</name>
    <dbReference type="NCBI Taxonomy" id="1755444"/>
    <lineage>
        <taxon>Eukaryota</taxon>
        <taxon>Fungi</taxon>
        <taxon>Dikarya</taxon>
        <taxon>Ascomycota</taxon>
        <taxon>Pezizomycotina</taxon>
        <taxon>Sordariomycetes</taxon>
        <taxon>Hypocreomycetidae</taxon>
        <taxon>Hypocreales</taxon>
        <taxon>Nectriaceae</taxon>
        <taxon>Nectria</taxon>
    </lineage>
</organism>
<name>NTNI_NECSZ</name>
<proteinExistence type="evidence at transcript level"/>
<protein>
    <recommendedName>
        <fullName evidence="5">Terpene cyclase/mutase ntnI</fullName>
        <ecNumber evidence="7">5.4.99.-</ecNumber>
    </recommendedName>
    <alternativeName>
        <fullName evidence="5">Nectripenoid biosynthesis cluster protein I</fullName>
    </alternativeName>
</protein>
<comment type="function">
    <text evidence="4 7">Terpene cyclase/mutase; part of the gene cluster that mediates the biosynthesis of the meroterpenoids nectripenoids A and B, as well as cochliquninone D and isocochliquninone E (PubMed:29797385). The pathway probably begins with the HR-PKS ntnH that catalyzes two chain-extension steps to form a reduced triketide, which then primes the SAT domain in the NR-PKS ntnG to initiate three more cycles of extension to give a linear hexaketide corresponding to the polyketide part of nectripenoids (Probable). The FAD-dependent monooxygenase ntnJ then performs an oxidative decarboxylation at C11 of the ntnH/ntnG product, via an electrophilic aromatic hydroxylation with concomitant ipso-decarboxylation (Probable). The membrane-bound polyprenyl transferase ntnF then introduces a farnesyl group before the FAD-dependent monooxygenase ntnK functions as the first epoxidase on terminal C12'-C13' olefin, followed by a second epoxidation on C7'-C8' catalyzed by ntnA (Probable). The terpene cyclase/mutase ntnI then initiates the sequential tricyclic ring formation through protonation of the terminal epoxide and catalyzes the regioselective and stereoselective 6/6/6-tricyclic ring formation (Probable). The cytochrome P450 monooxygenase ntnM may then hydroxylate C1' (Probable).</text>
</comment>
<comment type="pathway">
    <text evidence="7">Secondary metabolite biosynthesis; terpenoid biosynthesis.</text>
</comment>
<comment type="similarity">
    <text evidence="6">Belongs to the terpene cyclase/mutase family.</text>
</comment>
<reference key="1">
    <citation type="journal article" date="2018" name="Angew. Chem. Int. Ed.">
        <title>Genome mining and comparative biosynthesis of meroterpenoids from two phylogenetically distinct fungi.</title>
        <authorList>
            <person name="Zhang X."/>
            <person name="Wang T.T."/>
            <person name="Xu Q.L."/>
            <person name="Xiong Y."/>
            <person name="Zhang L."/>
            <person name="Han H."/>
            <person name="Xu K."/>
            <person name="Guo W.J."/>
            <person name="Xu Q."/>
            <person name="Tan R.X."/>
            <person name="Ge H.M."/>
        </authorList>
    </citation>
    <scope>NUCLEOTIDE SEQUENCE [MRNA]</scope>
    <scope>FUNCTION</scope>
    <scope>PATHWAY</scope>
    <source>
        <strain>Z14-w</strain>
    </source>
</reference>
<feature type="chain" id="PRO_0000452569" description="Terpene cyclase/mutase ntnI">
    <location>
        <begin position="1"/>
        <end position="734"/>
    </location>
</feature>
<feature type="repeat" description="PFTB 1" evidence="2">
    <location>
        <begin position="130"/>
        <end position="172"/>
    </location>
</feature>
<feature type="repeat" description="PFTB 2" evidence="2">
    <location>
        <begin position="493"/>
        <end position="534"/>
    </location>
</feature>
<feature type="repeat" description="PFTB 3" evidence="2">
    <location>
        <begin position="570"/>
        <end position="610"/>
    </location>
</feature>
<feature type="repeat" description="PFTB 4" evidence="2">
    <location>
        <begin position="619"/>
        <end position="668"/>
    </location>
</feature>
<feature type="region of interest" description="Disordered" evidence="3">
    <location>
        <begin position="1"/>
        <end position="26"/>
    </location>
</feature>
<feature type="compositionally biased region" description="Polar residues" evidence="3">
    <location>
        <begin position="1"/>
        <end position="12"/>
    </location>
</feature>
<feature type="compositionally biased region" description="Basic and acidic residues" evidence="3">
    <location>
        <begin position="16"/>
        <end position="26"/>
    </location>
</feature>
<feature type="site" description="Transition state stabilizer" evidence="1">
    <location>
        <position position="396"/>
    </location>
</feature>
<feature type="site" description="Transition state stabilizer" evidence="1">
    <location>
        <position position="453"/>
    </location>
</feature>
<feature type="site" description="Transition state stabilizer" evidence="1">
    <location>
        <position position="591"/>
    </location>
</feature>
<evidence type="ECO:0000250" key="1">
    <source>
        <dbReference type="UniProtKB" id="P48449"/>
    </source>
</evidence>
<evidence type="ECO:0000255" key="2"/>
<evidence type="ECO:0000256" key="3">
    <source>
        <dbReference type="SAM" id="MobiDB-lite"/>
    </source>
</evidence>
<evidence type="ECO:0000269" key="4">
    <source>
    </source>
</evidence>
<evidence type="ECO:0000303" key="5">
    <source>
    </source>
</evidence>
<evidence type="ECO:0000305" key="6"/>
<evidence type="ECO:0000305" key="7">
    <source>
    </source>
</evidence>
<accession>A0A455LRW3</accession>
<sequence>MQSHIGQWTSTAKGHLSRDENGDEKTDYSRWRLVDRQGRQTWRYLESDEENEKSPQTVPEKYFLGLDTGLPDLPKAETPLQAAQDGVSFLSQLQLSSGQWASECTGPMFILPCVIIAWYVTNTPIPPAYAIEIRRYLFARQRVEDGGWGWHVEARSSAIGTALNYVVLRLLGASKDDHRLIQARKLLHSYGGATYAPGIAKFWLCVLGVMKWECVNPFLPEFWLLPDSDPTAPSKWYIHTRTNFTSLSYIWSKQWSFAGDEVTKQLQTELYPEPYSAIDFAAHRTSLAEVDNNYPKWWLVNLMNWLTVAVYIPYMRKKATVESAEQRVWELIQAEDKNSEFIGLSPISKAANMIACYIHDGKDSESVRSHGETIFQYFWMNGEGMACNLSDGIQVWDTSLAVQAIAAAGGAGNPRFQSTVIKAHEFLEDHQLLDDVQDQEMCCRGHRKGGWPFSTKYQGYMISECTGEGLRSILQLQKTFQLDLKKRIPADRLHNAVDCLLNLQNDTGGFGVYEKRQGSLKLAWLEMGEFSGKTMVTYDYVECTTAVVSALASFSEFYPDYRKEEVQTARTRGLEFIKSSQKPYGGWHGAWGVCFTYAGMFALESLALAGETYSNSEPSRKGCTFLVSKQRDDGGWGESYLSFQKEEYIEHEDAQVVQTAWACLGLMHAEYPDKTPVKRGLKLIMSRQQSKGHWLQEQYEGGVGDGVISYSNYKLYWPVRALAEYVRRFGNEEM</sequence>
<gene>
    <name evidence="5" type="primary">ntnI</name>
</gene>
<dbReference type="EC" id="5.4.99.-" evidence="7"/>
<dbReference type="EMBL" id="MH183002">
    <property type="protein sequence ID" value="AYO60869.1"/>
    <property type="molecule type" value="mRNA"/>
</dbReference>
<dbReference type="SMR" id="A0A455LRW3"/>
<dbReference type="UniPathway" id="UPA00213"/>
<dbReference type="GO" id="GO:0005811">
    <property type="term" value="C:lipid droplet"/>
    <property type="evidence" value="ECO:0007669"/>
    <property type="project" value="InterPro"/>
</dbReference>
<dbReference type="GO" id="GO:0000250">
    <property type="term" value="F:lanosterol synthase activity"/>
    <property type="evidence" value="ECO:0007669"/>
    <property type="project" value="TreeGrafter"/>
</dbReference>
<dbReference type="GO" id="GO:0006696">
    <property type="term" value="P:ergosterol biosynthetic process"/>
    <property type="evidence" value="ECO:0007669"/>
    <property type="project" value="TreeGrafter"/>
</dbReference>
<dbReference type="GO" id="GO:0016104">
    <property type="term" value="P:triterpenoid biosynthetic process"/>
    <property type="evidence" value="ECO:0007669"/>
    <property type="project" value="InterPro"/>
</dbReference>
<dbReference type="CDD" id="cd02892">
    <property type="entry name" value="SQCY_1"/>
    <property type="match status" value="1"/>
</dbReference>
<dbReference type="FunFam" id="1.50.10.20:FF:000002">
    <property type="entry name" value="Terpene cyclase/mutase family member"/>
    <property type="match status" value="1"/>
</dbReference>
<dbReference type="Gene3D" id="1.50.10.20">
    <property type="match status" value="2"/>
</dbReference>
<dbReference type="Gene3D" id="6.20.120.20">
    <property type="match status" value="1"/>
</dbReference>
<dbReference type="InterPro" id="IPR032696">
    <property type="entry name" value="SQ_cyclase_C"/>
</dbReference>
<dbReference type="InterPro" id="IPR032697">
    <property type="entry name" value="SQ_cyclase_N"/>
</dbReference>
<dbReference type="InterPro" id="IPR018333">
    <property type="entry name" value="Squalene_cyclase"/>
</dbReference>
<dbReference type="InterPro" id="IPR008930">
    <property type="entry name" value="Terpenoid_cyclase/PrenylTrfase"/>
</dbReference>
<dbReference type="NCBIfam" id="TIGR01787">
    <property type="entry name" value="squalene_cyclas"/>
    <property type="match status" value="1"/>
</dbReference>
<dbReference type="PANTHER" id="PTHR11764">
    <property type="entry name" value="TERPENE CYCLASE/MUTASE FAMILY MEMBER"/>
    <property type="match status" value="1"/>
</dbReference>
<dbReference type="PANTHER" id="PTHR11764:SF76">
    <property type="entry name" value="TERPENE CYCLASE_MUTASE FAMILY MEMBER"/>
    <property type="match status" value="1"/>
</dbReference>
<dbReference type="Pfam" id="PF13243">
    <property type="entry name" value="SQHop_cyclase_C"/>
    <property type="match status" value="1"/>
</dbReference>
<dbReference type="Pfam" id="PF13249">
    <property type="entry name" value="SQHop_cyclase_N"/>
    <property type="match status" value="1"/>
</dbReference>
<dbReference type="SUPFAM" id="SSF48239">
    <property type="entry name" value="Terpenoid cyclases/Protein prenyltransferases"/>
    <property type="match status" value="2"/>
</dbReference>